<name>Y318_AERS4</name>
<protein>
    <recommendedName>
        <fullName evidence="1">Nucleotide-binding protein ASA_0318</fullName>
    </recommendedName>
</protein>
<accession>A4SHY0</accession>
<keyword id="KW-0067">ATP-binding</keyword>
<keyword id="KW-0342">GTP-binding</keyword>
<keyword id="KW-0547">Nucleotide-binding</keyword>
<dbReference type="EMBL" id="CP000644">
    <property type="protein sequence ID" value="ABO88502.1"/>
    <property type="molecule type" value="Genomic_DNA"/>
</dbReference>
<dbReference type="SMR" id="A4SHY0"/>
<dbReference type="STRING" id="29491.GCA_000820065_03340"/>
<dbReference type="KEGG" id="asa:ASA_0318"/>
<dbReference type="eggNOG" id="COG1660">
    <property type="taxonomic scope" value="Bacteria"/>
</dbReference>
<dbReference type="HOGENOM" id="CLU_059558_1_1_6"/>
<dbReference type="Proteomes" id="UP000000225">
    <property type="component" value="Chromosome"/>
</dbReference>
<dbReference type="GO" id="GO:0005524">
    <property type="term" value="F:ATP binding"/>
    <property type="evidence" value="ECO:0007669"/>
    <property type="project" value="UniProtKB-UniRule"/>
</dbReference>
<dbReference type="GO" id="GO:0005525">
    <property type="term" value="F:GTP binding"/>
    <property type="evidence" value="ECO:0007669"/>
    <property type="project" value="UniProtKB-UniRule"/>
</dbReference>
<dbReference type="Gene3D" id="3.40.50.300">
    <property type="entry name" value="P-loop containing nucleotide triphosphate hydrolases"/>
    <property type="match status" value="1"/>
</dbReference>
<dbReference type="HAMAP" id="MF_00636">
    <property type="entry name" value="RapZ_like"/>
    <property type="match status" value="1"/>
</dbReference>
<dbReference type="InterPro" id="IPR027417">
    <property type="entry name" value="P-loop_NTPase"/>
</dbReference>
<dbReference type="InterPro" id="IPR005337">
    <property type="entry name" value="RapZ-like"/>
</dbReference>
<dbReference type="InterPro" id="IPR053930">
    <property type="entry name" value="RapZ-like_N"/>
</dbReference>
<dbReference type="InterPro" id="IPR053931">
    <property type="entry name" value="RapZ_C"/>
</dbReference>
<dbReference type="NCBIfam" id="NF003828">
    <property type="entry name" value="PRK05416.1"/>
    <property type="match status" value="1"/>
</dbReference>
<dbReference type="PANTHER" id="PTHR30448">
    <property type="entry name" value="RNASE ADAPTER PROTEIN RAPZ"/>
    <property type="match status" value="1"/>
</dbReference>
<dbReference type="PANTHER" id="PTHR30448:SF0">
    <property type="entry name" value="RNASE ADAPTER PROTEIN RAPZ"/>
    <property type="match status" value="1"/>
</dbReference>
<dbReference type="Pfam" id="PF22740">
    <property type="entry name" value="PapZ_C"/>
    <property type="match status" value="1"/>
</dbReference>
<dbReference type="Pfam" id="PF03668">
    <property type="entry name" value="RapZ-like_N"/>
    <property type="match status" value="1"/>
</dbReference>
<dbReference type="PIRSF" id="PIRSF005052">
    <property type="entry name" value="P-loopkin"/>
    <property type="match status" value="1"/>
</dbReference>
<dbReference type="SUPFAM" id="SSF52540">
    <property type="entry name" value="P-loop containing nucleoside triphosphate hydrolases"/>
    <property type="match status" value="1"/>
</dbReference>
<proteinExistence type="inferred from homology"/>
<gene>
    <name type="ordered locus">ASA_0318</name>
</gene>
<comment type="function">
    <text evidence="1">Displays ATPase and GTPase activities.</text>
</comment>
<comment type="similarity">
    <text evidence="1">Belongs to the RapZ-like family.</text>
</comment>
<organism>
    <name type="scientific">Aeromonas salmonicida (strain A449)</name>
    <dbReference type="NCBI Taxonomy" id="382245"/>
    <lineage>
        <taxon>Bacteria</taxon>
        <taxon>Pseudomonadati</taxon>
        <taxon>Pseudomonadota</taxon>
        <taxon>Gammaproteobacteria</taxon>
        <taxon>Aeromonadales</taxon>
        <taxon>Aeromonadaceae</taxon>
        <taxon>Aeromonas</taxon>
    </lineage>
</organism>
<reference key="1">
    <citation type="journal article" date="2008" name="BMC Genomics">
        <title>The genome of Aeromonas salmonicida subsp. salmonicida A449: insights into the evolution of a fish pathogen.</title>
        <authorList>
            <person name="Reith M.E."/>
            <person name="Singh R.K."/>
            <person name="Curtis B."/>
            <person name="Boyd J.M."/>
            <person name="Bouevitch A."/>
            <person name="Kimball J."/>
            <person name="Munholland J."/>
            <person name="Murphy C."/>
            <person name="Sarty D."/>
            <person name="Williams J."/>
            <person name="Nash J.H."/>
            <person name="Johnson S.C."/>
            <person name="Brown L.L."/>
        </authorList>
    </citation>
    <scope>NUCLEOTIDE SEQUENCE [LARGE SCALE GENOMIC DNA]</scope>
    <source>
        <strain>A449</strain>
    </source>
</reference>
<feature type="chain" id="PRO_1000056803" description="Nucleotide-binding protein ASA_0318">
    <location>
        <begin position="1"/>
        <end position="288"/>
    </location>
</feature>
<feature type="binding site" evidence="1">
    <location>
        <begin position="8"/>
        <end position="15"/>
    </location>
    <ligand>
        <name>ATP</name>
        <dbReference type="ChEBI" id="CHEBI:30616"/>
    </ligand>
</feature>
<feature type="binding site" evidence="1">
    <location>
        <begin position="56"/>
        <end position="59"/>
    </location>
    <ligand>
        <name>GTP</name>
        <dbReference type="ChEBI" id="CHEBI:37565"/>
    </ligand>
</feature>
<evidence type="ECO:0000255" key="1">
    <source>
        <dbReference type="HAMAP-Rule" id="MF_00636"/>
    </source>
</evidence>
<sequence>MQLIVVSGRSGSGKTVALRVLEDLGYYCVDNLPVNLLPQLIVSVESQYDKLAVSIDVRNLPVSADKLETLLAQVRNEGRVEFSSFFFDAENSTLLKRYGESRRLHPLSRKQLSLDEAIREETNLLAPLSSTADLRIDTTSLSIHDLSELIKTRVLGKKENELVLVFESFGFKYGIPKDADFVFDARFLPNPHWIPELKPFTGKDEPVARYLSSQPDVMQFILQIENMLATWLPHLERNNRSYVTVGIGCTGGQHRSVFIAEQLAGAFRLLGKNVQIRHRTLDKSTPQH</sequence>